<dbReference type="EC" id="6.3.5.2" evidence="1"/>
<dbReference type="EMBL" id="CP000672">
    <property type="protein sequence ID" value="ABQ99732.1"/>
    <property type="molecule type" value="Genomic_DNA"/>
</dbReference>
<dbReference type="SMR" id="A5UG27"/>
<dbReference type="MEROPS" id="C26.957"/>
<dbReference type="KEGG" id="hiq:CGSHiGG_03740"/>
<dbReference type="HOGENOM" id="CLU_014340_0_5_6"/>
<dbReference type="UniPathway" id="UPA00189">
    <property type="reaction ID" value="UER00296"/>
</dbReference>
<dbReference type="Proteomes" id="UP000001990">
    <property type="component" value="Chromosome"/>
</dbReference>
<dbReference type="GO" id="GO:0005829">
    <property type="term" value="C:cytosol"/>
    <property type="evidence" value="ECO:0007669"/>
    <property type="project" value="TreeGrafter"/>
</dbReference>
<dbReference type="GO" id="GO:0005524">
    <property type="term" value="F:ATP binding"/>
    <property type="evidence" value="ECO:0007669"/>
    <property type="project" value="UniProtKB-UniRule"/>
</dbReference>
<dbReference type="GO" id="GO:0003921">
    <property type="term" value="F:GMP synthase activity"/>
    <property type="evidence" value="ECO:0007669"/>
    <property type="project" value="InterPro"/>
</dbReference>
<dbReference type="CDD" id="cd01742">
    <property type="entry name" value="GATase1_GMP_Synthase"/>
    <property type="match status" value="1"/>
</dbReference>
<dbReference type="CDD" id="cd01997">
    <property type="entry name" value="GMP_synthase_C"/>
    <property type="match status" value="1"/>
</dbReference>
<dbReference type="FunFam" id="3.30.300.10:FF:000002">
    <property type="entry name" value="GMP synthase [glutamine-hydrolyzing]"/>
    <property type="match status" value="1"/>
</dbReference>
<dbReference type="FunFam" id="3.40.50.620:FF:000001">
    <property type="entry name" value="GMP synthase [glutamine-hydrolyzing]"/>
    <property type="match status" value="1"/>
</dbReference>
<dbReference type="FunFam" id="3.40.50.880:FF:000001">
    <property type="entry name" value="GMP synthase [glutamine-hydrolyzing]"/>
    <property type="match status" value="1"/>
</dbReference>
<dbReference type="Gene3D" id="3.30.300.10">
    <property type="match status" value="1"/>
</dbReference>
<dbReference type="Gene3D" id="3.40.50.880">
    <property type="match status" value="1"/>
</dbReference>
<dbReference type="Gene3D" id="3.40.50.620">
    <property type="entry name" value="HUPs"/>
    <property type="match status" value="1"/>
</dbReference>
<dbReference type="HAMAP" id="MF_00344">
    <property type="entry name" value="GMP_synthase"/>
    <property type="match status" value="1"/>
</dbReference>
<dbReference type="InterPro" id="IPR029062">
    <property type="entry name" value="Class_I_gatase-like"/>
</dbReference>
<dbReference type="InterPro" id="IPR017926">
    <property type="entry name" value="GATASE"/>
</dbReference>
<dbReference type="InterPro" id="IPR001674">
    <property type="entry name" value="GMP_synth_C"/>
</dbReference>
<dbReference type="InterPro" id="IPR004739">
    <property type="entry name" value="GMP_synth_GATase"/>
</dbReference>
<dbReference type="InterPro" id="IPR022955">
    <property type="entry name" value="GMP_synthase"/>
</dbReference>
<dbReference type="InterPro" id="IPR025777">
    <property type="entry name" value="GMPS_ATP_PPase_dom"/>
</dbReference>
<dbReference type="InterPro" id="IPR022310">
    <property type="entry name" value="NAD/GMP_synthase"/>
</dbReference>
<dbReference type="InterPro" id="IPR014729">
    <property type="entry name" value="Rossmann-like_a/b/a_fold"/>
</dbReference>
<dbReference type="NCBIfam" id="TIGR00884">
    <property type="entry name" value="guaA_Cterm"/>
    <property type="match status" value="1"/>
</dbReference>
<dbReference type="NCBIfam" id="TIGR00888">
    <property type="entry name" value="guaA_Nterm"/>
    <property type="match status" value="1"/>
</dbReference>
<dbReference type="NCBIfam" id="NF000848">
    <property type="entry name" value="PRK00074.1"/>
    <property type="match status" value="1"/>
</dbReference>
<dbReference type="PANTHER" id="PTHR11922:SF2">
    <property type="entry name" value="GMP SYNTHASE [GLUTAMINE-HYDROLYZING]"/>
    <property type="match status" value="1"/>
</dbReference>
<dbReference type="PANTHER" id="PTHR11922">
    <property type="entry name" value="GMP SYNTHASE-RELATED"/>
    <property type="match status" value="1"/>
</dbReference>
<dbReference type="Pfam" id="PF00117">
    <property type="entry name" value="GATase"/>
    <property type="match status" value="1"/>
</dbReference>
<dbReference type="Pfam" id="PF00958">
    <property type="entry name" value="GMP_synt_C"/>
    <property type="match status" value="1"/>
</dbReference>
<dbReference type="Pfam" id="PF02540">
    <property type="entry name" value="NAD_synthase"/>
    <property type="match status" value="1"/>
</dbReference>
<dbReference type="PRINTS" id="PR00097">
    <property type="entry name" value="ANTSNTHASEII"/>
</dbReference>
<dbReference type="PRINTS" id="PR00099">
    <property type="entry name" value="CPSGATASE"/>
</dbReference>
<dbReference type="PRINTS" id="PR00096">
    <property type="entry name" value="GATASE"/>
</dbReference>
<dbReference type="SUPFAM" id="SSF52402">
    <property type="entry name" value="Adenine nucleotide alpha hydrolases-like"/>
    <property type="match status" value="1"/>
</dbReference>
<dbReference type="SUPFAM" id="SSF52317">
    <property type="entry name" value="Class I glutamine amidotransferase-like"/>
    <property type="match status" value="1"/>
</dbReference>
<dbReference type="SUPFAM" id="SSF54810">
    <property type="entry name" value="GMP synthetase C-terminal dimerisation domain"/>
    <property type="match status" value="1"/>
</dbReference>
<dbReference type="PROSITE" id="PS51273">
    <property type="entry name" value="GATASE_TYPE_1"/>
    <property type="match status" value="1"/>
</dbReference>
<dbReference type="PROSITE" id="PS51553">
    <property type="entry name" value="GMPS_ATP_PPASE"/>
    <property type="match status" value="1"/>
</dbReference>
<sequence length="523" mass="58092">MTNIHNHKILILDFGSQYTQLIARRVREIGVYCELWAWDVTEQQIREFAPTGIILSGGPESTTEENSPRAPEYVFNAGVPVLGVCYGMQTMAMQLGGLTETSDHREFGYASVSLENSTALFANLNDNSTASEPKLDVWMSHGDKVTRLPENFKVTGTTLTCPIAAMSDENRRFYGVQFHPEVTHTKKGLELLTNFVVNICGCETKWTAENIIEDAVARIKEQVGNDEVILGLSGGVDSSVVALLLHRAIGKNLHCVFVDNGLLRLHEGDQVMEMFGDKFGLNITRVDAESRFLGELAGVSDPEAKRKIIGKVFVDVFDDESKKLTNVKWLAQGTIYPDVIESAASKTGKAHVIKSHHNVGGLPDYMKLGLVEPLRELFKDEVRKIGLALGLPAEMINRHPFPGPGLGVRVLGEVKKEYCDLLRRADAIFIEELRNSGWYEKTSQAFSVFLPVKSVGVMGDGRKYDWVISLRAVETIDFMTAHWAHLPYDLLGKVSNRIINEVNGISRVVYDISGKPPATIEWE</sequence>
<evidence type="ECO:0000255" key="1">
    <source>
        <dbReference type="HAMAP-Rule" id="MF_00344"/>
    </source>
</evidence>
<protein>
    <recommendedName>
        <fullName evidence="1">GMP synthase [glutamine-hydrolyzing]</fullName>
        <ecNumber evidence="1">6.3.5.2</ecNumber>
    </recommendedName>
    <alternativeName>
        <fullName evidence="1">GMP synthetase</fullName>
    </alternativeName>
    <alternativeName>
        <fullName evidence="1">Glutamine amidotransferase</fullName>
    </alternativeName>
</protein>
<proteinExistence type="inferred from homology"/>
<organism>
    <name type="scientific">Haemophilus influenzae (strain PittGG)</name>
    <dbReference type="NCBI Taxonomy" id="374931"/>
    <lineage>
        <taxon>Bacteria</taxon>
        <taxon>Pseudomonadati</taxon>
        <taxon>Pseudomonadota</taxon>
        <taxon>Gammaproteobacteria</taxon>
        <taxon>Pasteurellales</taxon>
        <taxon>Pasteurellaceae</taxon>
        <taxon>Haemophilus</taxon>
    </lineage>
</organism>
<keyword id="KW-0067">ATP-binding</keyword>
<keyword id="KW-0315">Glutamine amidotransferase</keyword>
<keyword id="KW-0332">GMP biosynthesis</keyword>
<keyword id="KW-0436">Ligase</keyword>
<keyword id="KW-0547">Nucleotide-binding</keyword>
<keyword id="KW-0658">Purine biosynthesis</keyword>
<name>GUAA_HAEIG</name>
<accession>A5UG27</accession>
<feature type="chain" id="PRO_1000120310" description="GMP synthase [glutamine-hydrolyzing]">
    <location>
        <begin position="1"/>
        <end position="523"/>
    </location>
</feature>
<feature type="domain" description="Glutamine amidotransferase type-1" evidence="1">
    <location>
        <begin position="8"/>
        <end position="205"/>
    </location>
</feature>
<feature type="domain" description="GMPS ATP-PPase" evidence="1">
    <location>
        <begin position="206"/>
        <end position="398"/>
    </location>
</feature>
<feature type="active site" description="Nucleophile" evidence="1">
    <location>
        <position position="85"/>
    </location>
</feature>
<feature type="active site" evidence="1">
    <location>
        <position position="179"/>
    </location>
</feature>
<feature type="active site" evidence="1">
    <location>
        <position position="181"/>
    </location>
</feature>
<feature type="binding site" evidence="1">
    <location>
        <begin position="233"/>
        <end position="239"/>
    </location>
    <ligand>
        <name>ATP</name>
        <dbReference type="ChEBI" id="CHEBI:30616"/>
    </ligand>
</feature>
<gene>
    <name evidence="1" type="primary">guaA</name>
    <name type="ordered locus">CGSHiGG_03740</name>
</gene>
<comment type="function">
    <text evidence="1">Catalyzes the synthesis of GMP from XMP.</text>
</comment>
<comment type="catalytic activity">
    <reaction evidence="1">
        <text>XMP + L-glutamine + ATP + H2O = GMP + L-glutamate + AMP + diphosphate + 2 H(+)</text>
        <dbReference type="Rhea" id="RHEA:11680"/>
        <dbReference type="ChEBI" id="CHEBI:15377"/>
        <dbReference type="ChEBI" id="CHEBI:15378"/>
        <dbReference type="ChEBI" id="CHEBI:29985"/>
        <dbReference type="ChEBI" id="CHEBI:30616"/>
        <dbReference type="ChEBI" id="CHEBI:33019"/>
        <dbReference type="ChEBI" id="CHEBI:57464"/>
        <dbReference type="ChEBI" id="CHEBI:58115"/>
        <dbReference type="ChEBI" id="CHEBI:58359"/>
        <dbReference type="ChEBI" id="CHEBI:456215"/>
        <dbReference type="EC" id="6.3.5.2"/>
    </reaction>
</comment>
<comment type="pathway">
    <text evidence="1">Purine metabolism; GMP biosynthesis; GMP from XMP (L-Gln route): step 1/1.</text>
</comment>
<comment type="subunit">
    <text evidence="1">Homodimer.</text>
</comment>
<reference key="1">
    <citation type="journal article" date="2007" name="Genome Biol.">
        <title>Characterization and modeling of the Haemophilus influenzae core and supragenomes based on the complete genomic sequences of Rd and 12 clinical nontypeable strains.</title>
        <authorList>
            <person name="Hogg J.S."/>
            <person name="Hu F.Z."/>
            <person name="Janto B."/>
            <person name="Boissy R."/>
            <person name="Hayes J."/>
            <person name="Keefe R."/>
            <person name="Post J.C."/>
            <person name="Ehrlich G.D."/>
        </authorList>
    </citation>
    <scope>NUCLEOTIDE SEQUENCE [LARGE SCALE GENOMIC DNA]</scope>
    <source>
        <strain>PittGG</strain>
    </source>
</reference>